<reference key="1">
    <citation type="journal article" date="1999" name="Science">
        <title>Genome sequence of the radioresistant bacterium Deinococcus radiodurans R1.</title>
        <authorList>
            <person name="White O."/>
            <person name="Eisen J.A."/>
            <person name="Heidelberg J.F."/>
            <person name="Hickey E.K."/>
            <person name="Peterson J.D."/>
            <person name="Dodson R.J."/>
            <person name="Haft D.H."/>
            <person name="Gwinn M.L."/>
            <person name="Nelson W.C."/>
            <person name="Richardson D.L."/>
            <person name="Moffat K.S."/>
            <person name="Qin H."/>
            <person name="Jiang L."/>
            <person name="Pamphile W."/>
            <person name="Crosby M."/>
            <person name="Shen M."/>
            <person name="Vamathevan J.J."/>
            <person name="Lam P."/>
            <person name="McDonald L.A."/>
            <person name="Utterback T.R."/>
            <person name="Zalewski C."/>
            <person name="Makarova K.S."/>
            <person name="Aravind L."/>
            <person name="Daly M.J."/>
            <person name="Minton K.W."/>
            <person name="Fleischmann R.D."/>
            <person name="Ketchum K.A."/>
            <person name="Nelson K.E."/>
            <person name="Salzberg S.L."/>
            <person name="Smith H.O."/>
            <person name="Venter J.C."/>
            <person name="Fraser C.M."/>
        </authorList>
    </citation>
    <scope>NUCLEOTIDE SEQUENCE [LARGE SCALE GENOMIC DNA]</scope>
    <source>
        <strain>ATCC 13939 / DSM 20539 / JCM 16871 / CCUG 27074 / LMG 4051 / NBRC 15346 / NCIMB 9279 / VKM B-1422 / R1</strain>
    </source>
</reference>
<protein>
    <recommendedName>
        <fullName evidence="1">Ribosomal protein uS12 methylthiotransferase RimO</fullName>
        <shortName evidence="1">uS12 MTTase</shortName>
        <shortName evidence="1">uS12 methylthiotransferase</shortName>
        <ecNumber evidence="1">2.8.4.4</ecNumber>
    </recommendedName>
    <alternativeName>
        <fullName evidence="1">Ribosomal protein uS12 (aspartate-C(3))-methylthiotransferase</fullName>
    </alternativeName>
    <alternativeName>
        <fullName evidence="1">Ribosome maturation factor RimO</fullName>
    </alternativeName>
</protein>
<proteinExistence type="inferred from homology"/>
<organism>
    <name type="scientific">Deinococcus radiodurans (strain ATCC 13939 / DSM 20539 / JCM 16871 / CCUG 27074 / LMG 4051 / NBRC 15346 / NCIMB 9279 / VKM B-1422 / R1)</name>
    <dbReference type="NCBI Taxonomy" id="243230"/>
    <lineage>
        <taxon>Bacteria</taxon>
        <taxon>Thermotogati</taxon>
        <taxon>Deinococcota</taxon>
        <taxon>Deinococci</taxon>
        <taxon>Deinococcales</taxon>
        <taxon>Deinococcaceae</taxon>
        <taxon>Deinococcus</taxon>
    </lineage>
</organism>
<sequence length="504" mass="55652">MEDDVTTTERLPAPPLDTASKRVGFISLGCPKALVDSERILTQLRAEGYEVAPSYEGADAVIVNTCGFITPAVEESLSAIGEALDATGKVIVTGCLGERPEKIMERHPKVAAITGSEAVDDVMGHVRELLPIDQGAFTGLLPVAAPGMRAGVETPQRENTRHGDVFAPSVKLTPRHYAYVKVAEGCNHTCAFCIIPKLRGLQVSRDAGAVLYEAYRLIAGGTKELMIIAQDTSAYGVDLRYRESEFQGEQVRAHLTDLAVKLGEMGAWVRMHYVYPYPHVDRVVELMAQGKVLPYLDIPLQHASPKILKLMRRPGAGKQLDTIRRWREICPELVIRSTFIVGFPGETEEDFQELLQFLEDARLDRVGAFPYSDIEEADANALPGAVPEEVKQERLARFMEVAQRISTEKLSEKVGRVMDVIIDEFNDDEDDQPGTRLIGRTKGDAPGIDGQVYLYAGDFAGLVKIGDIVRARIEDSDEYDLFGEVIEKPEWKPNVPQLGHFGKH</sequence>
<name>RIMO_DEIRA</name>
<gene>
    <name evidence="1" type="primary">rimO</name>
    <name type="ordered locus">DR_A0189</name>
</gene>
<feature type="chain" id="PRO_0000374800" description="Ribosomal protein uS12 methylthiotransferase RimO">
    <location>
        <begin position="1"/>
        <end position="504"/>
    </location>
</feature>
<feature type="domain" description="MTTase N-terminal" evidence="1">
    <location>
        <begin position="21"/>
        <end position="131"/>
    </location>
</feature>
<feature type="domain" description="Radical SAM core" evidence="2">
    <location>
        <begin position="172"/>
        <end position="408"/>
    </location>
</feature>
<feature type="domain" description="TRAM" evidence="1">
    <location>
        <begin position="411"/>
        <end position="487"/>
    </location>
</feature>
<feature type="binding site" evidence="1">
    <location>
        <position position="30"/>
    </location>
    <ligand>
        <name>[4Fe-4S] cluster</name>
        <dbReference type="ChEBI" id="CHEBI:49883"/>
        <label>1</label>
    </ligand>
</feature>
<feature type="binding site" evidence="1">
    <location>
        <position position="66"/>
    </location>
    <ligand>
        <name>[4Fe-4S] cluster</name>
        <dbReference type="ChEBI" id="CHEBI:49883"/>
        <label>1</label>
    </ligand>
</feature>
<feature type="binding site" evidence="1">
    <location>
        <position position="95"/>
    </location>
    <ligand>
        <name>[4Fe-4S] cluster</name>
        <dbReference type="ChEBI" id="CHEBI:49883"/>
        <label>1</label>
    </ligand>
</feature>
<feature type="binding site" evidence="1">
    <location>
        <position position="186"/>
    </location>
    <ligand>
        <name>[4Fe-4S] cluster</name>
        <dbReference type="ChEBI" id="CHEBI:49883"/>
        <label>2</label>
        <note>4Fe-4S-S-AdoMet</note>
    </ligand>
</feature>
<feature type="binding site" evidence="1">
    <location>
        <position position="190"/>
    </location>
    <ligand>
        <name>[4Fe-4S] cluster</name>
        <dbReference type="ChEBI" id="CHEBI:49883"/>
        <label>2</label>
        <note>4Fe-4S-S-AdoMet</note>
    </ligand>
</feature>
<feature type="binding site" evidence="1">
    <location>
        <position position="193"/>
    </location>
    <ligand>
        <name>[4Fe-4S] cluster</name>
        <dbReference type="ChEBI" id="CHEBI:49883"/>
        <label>2</label>
        <note>4Fe-4S-S-AdoMet</note>
    </ligand>
</feature>
<accession>Q9RYW7</accession>
<dbReference type="EC" id="2.8.4.4" evidence="1"/>
<dbReference type="EMBL" id="AE001825">
    <property type="protein sequence ID" value="AAF12186.1"/>
    <property type="molecule type" value="Genomic_DNA"/>
</dbReference>
<dbReference type="PIR" id="E75615">
    <property type="entry name" value="E75615"/>
</dbReference>
<dbReference type="RefSeq" id="NP_285512.1">
    <property type="nucleotide sequence ID" value="NC_001264.1"/>
</dbReference>
<dbReference type="RefSeq" id="WP_010889448.1">
    <property type="nucleotide sequence ID" value="NC_001264.1"/>
</dbReference>
<dbReference type="SMR" id="Q9RYW7"/>
<dbReference type="STRING" id="243230.DR_A0189"/>
<dbReference type="PaxDb" id="243230-DR_A0189"/>
<dbReference type="EnsemblBacteria" id="AAF12186">
    <property type="protein sequence ID" value="AAF12186"/>
    <property type="gene ID" value="DR_A0189"/>
</dbReference>
<dbReference type="KEGG" id="dra:DR_A0189"/>
<dbReference type="PATRIC" id="fig|243230.17.peg.3078"/>
<dbReference type="eggNOG" id="COG0621">
    <property type="taxonomic scope" value="Bacteria"/>
</dbReference>
<dbReference type="HOGENOM" id="CLU_018697_0_0_0"/>
<dbReference type="InParanoid" id="Q9RYW7"/>
<dbReference type="OrthoDB" id="9805215at2"/>
<dbReference type="Proteomes" id="UP000002524">
    <property type="component" value="Chromosome 2"/>
</dbReference>
<dbReference type="GO" id="GO:0005829">
    <property type="term" value="C:cytosol"/>
    <property type="evidence" value="ECO:0000318"/>
    <property type="project" value="GO_Central"/>
</dbReference>
<dbReference type="GO" id="GO:0051539">
    <property type="term" value="F:4 iron, 4 sulfur cluster binding"/>
    <property type="evidence" value="ECO:0000318"/>
    <property type="project" value="GO_Central"/>
</dbReference>
<dbReference type="GO" id="GO:0035599">
    <property type="term" value="F:aspartic acid methylthiotransferase activity"/>
    <property type="evidence" value="ECO:0000318"/>
    <property type="project" value="GO_Central"/>
</dbReference>
<dbReference type="GO" id="GO:0046872">
    <property type="term" value="F:metal ion binding"/>
    <property type="evidence" value="ECO:0007669"/>
    <property type="project" value="UniProtKB-KW"/>
</dbReference>
<dbReference type="GO" id="GO:0103039">
    <property type="term" value="F:protein methylthiotransferase activity"/>
    <property type="evidence" value="ECO:0007669"/>
    <property type="project" value="UniProtKB-EC"/>
</dbReference>
<dbReference type="GO" id="GO:0006400">
    <property type="term" value="P:tRNA modification"/>
    <property type="evidence" value="ECO:0007669"/>
    <property type="project" value="InterPro"/>
</dbReference>
<dbReference type="CDD" id="cd01335">
    <property type="entry name" value="Radical_SAM"/>
    <property type="match status" value="1"/>
</dbReference>
<dbReference type="FunFam" id="2.40.50.140:FF:000060">
    <property type="entry name" value="Ribosomal protein S12 methylthiotransferase RimO"/>
    <property type="match status" value="1"/>
</dbReference>
<dbReference type="FunFam" id="3.40.50.12160:FF:000002">
    <property type="entry name" value="Ribosomal protein S12 methylthiotransferase RimO"/>
    <property type="match status" value="1"/>
</dbReference>
<dbReference type="FunFam" id="3.80.30.20:FF:000001">
    <property type="entry name" value="tRNA-2-methylthio-N(6)-dimethylallyladenosine synthase 2"/>
    <property type="match status" value="1"/>
</dbReference>
<dbReference type="Gene3D" id="3.40.50.12160">
    <property type="entry name" value="Methylthiotransferase, N-terminal domain"/>
    <property type="match status" value="1"/>
</dbReference>
<dbReference type="Gene3D" id="2.40.50.140">
    <property type="entry name" value="Nucleic acid-binding proteins"/>
    <property type="match status" value="1"/>
</dbReference>
<dbReference type="Gene3D" id="3.80.30.20">
    <property type="entry name" value="tm_1862 like domain"/>
    <property type="match status" value="1"/>
</dbReference>
<dbReference type="HAMAP" id="MF_01865">
    <property type="entry name" value="MTTase_RimO"/>
    <property type="match status" value="1"/>
</dbReference>
<dbReference type="InterPro" id="IPR006638">
    <property type="entry name" value="Elp3/MiaA/NifB-like_rSAM"/>
</dbReference>
<dbReference type="InterPro" id="IPR005839">
    <property type="entry name" value="Methylthiotransferase"/>
</dbReference>
<dbReference type="InterPro" id="IPR020612">
    <property type="entry name" value="Methylthiotransferase_CS"/>
</dbReference>
<dbReference type="InterPro" id="IPR013848">
    <property type="entry name" value="Methylthiotransferase_N"/>
</dbReference>
<dbReference type="InterPro" id="IPR038135">
    <property type="entry name" value="Methylthiotransferase_N_sf"/>
</dbReference>
<dbReference type="InterPro" id="IPR012340">
    <property type="entry name" value="NA-bd_OB-fold"/>
</dbReference>
<dbReference type="InterPro" id="IPR005840">
    <property type="entry name" value="Ribosomal_uS12_MeSTrfase_RimO"/>
</dbReference>
<dbReference type="InterPro" id="IPR007197">
    <property type="entry name" value="rSAM"/>
</dbReference>
<dbReference type="InterPro" id="IPR023404">
    <property type="entry name" value="rSAM_horseshoe"/>
</dbReference>
<dbReference type="InterPro" id="IPR002792">
    <property type="entry name" value="TRAM_dom"/>
</dbReference>
<dbReference type="NCBIfam" id="TIGR01125">
    <property type="entry name" value="30S ribosomal protein S12 methylthiotransferase RimO"/>
    <property type="match status" value="1"/>
</dbReference>
<dbReference type="NCBIfam" id="TIGR00089">
    <property type="entry name" value="MiaB/RimO family radical SAM methylthiotransferase"/>
    <property type="match status" value="1"/>
</dbReference>
<dbReference type="PANTHER" id="PTHR43837">
    <property type="entry name" value="RIBOSOMAL PROTEIN S12 METHYLTHIOTRANSFERASE RIMO"/>
    <property type="match status" value="1"/>
</dbReference>
<dbReference type="PANTHER" id="PTHR43837:SF1">
    <property type="entry name" value="RIBOSOMAL PROTEIN US12 METHYLTHIOTRANSFERASE RIMO"/>
    <property type="match status" value="1"/>
</dbReference>
<dbReference type="Pfam" id="PF04055">
    <property type="entry name" value="Radical_SAM"/>
    <property type="match status" value="1"/>
</dbReference>
<dbReference type="Pfam" id="PF18693">
    <property type="entry name" value="TRAM_2"/>
    <property type="match status" value="1"/>
</dbReference>
<dbReference type="Pfam" id="PF00919">
    <property type="entry name" value="UPF0004"/>
    <property type="match status" value="1"/>
</dbReference>
<dbReference type="SFLD" id="SFLDG01082">
    <property type="entry name" value="B12-binding_domain_containing"/>
    <property type="match status" value="1"/>
</dbReference>
<dbReference type="SFLD" id="SFLDS00029">
    <property type="entry name" value="Radical_SAM"/>
    <property type="match status" value="1"/>
</dbReference>
<dbReference type="SFLD" id="SFLDF00274">
    <property type="entry name" value="ribosomal_protein_S12_methylth"/>
    <property type="match status" value="1"/>
</dbReference>
<dbReference type="SMART" id="SM00729">
    <property type="entry name" value="Elp3"/>
    <property type="match status" value="1"/>
</dbReference>
<dbReference type="SUPFAM" id="SSF102114">
    <property type="entry name" value="Radical SAM enzymes"/>
    <property type="match status" value="1"/>
</dbReference>
<dbReference type="PROSITE" id="PS51449">
    <property type="entry name" value="MTTASE_N"/>
    <property type="match status" value="1"/>
</dbReference>
<dbReference type="PROSITE" id="PS01278">
    <property type="entry name" value="MTTASE_RADICAL"/>
    <property type="match status" value="1"/>
</dbReference>
<dbReference type="PROSITE" id="PS51918">
    <property type="entry name" value="RADICAL_SAM"/>
    <property type="match status" value="1"/>
</dbReference>
<dbReference type="PROSITE" id="PS50926">
    <property type="entry name" value="TRAM"/>
    <property type="match status" value="1"/>
</dbReference>
<keyword id="KW-0004">4Fe-4S</keyword>
<keyword id="KW-0963">Cytoplasm</keyword>
<keyword id="KW-0408">Iron</keyword>
<keyword id="KW-0411">Iron-sulfur</keyword>
<keyword id="KW-0479">Metal-binding</keyword>
<keyword id="KW-1185">Reference proteome</keyword>
<keyword id="KW-0949">S-adenosyl-L-methionine</keyword>
<keyword id="KW-0808">Transferase</keyword>
<evidence type="ECO:0000255" key="1">
    <source>
        <dbReference type="HAMAP-Rule" id="MF_01865"/>
    </source>
</evidence>
<evidence type="ECO:0000255" key="2">
    <source>
        <dbReference type="PROSITE-ProRule" id="PRU01266"/>
    </source>
</evidence>
<comment type="function">
    <text evidence="1">Catalyzes the methylthiolation of an aspartic acid residue of ribosomal protein uS12.</text>
</comment>
<comment type="catalytic activity">
    <reaction evidence="1">
        <text>L-aspartate(89)-[ribosomal protein uS12]-hydrogen + (sulfur carrier)-SH + AH2 + 2 S-adenosyl-L-methionine = 3-methylsulfanyl-L-aspartate(89)-[ribosomal protein uS12]-hydrogen + (sulfur carrier)-H + 5'-deoxyadenosine + L-methionine + A + S-adenosyl-L-homocysteine + 2 H(+)</text>
        <dbReference type="Rhea" id="RHEA:37087"/>
        <dbReference type="Rhea" id="RHEA-COMP:10460"/>
        <dbReference type="Rhea" id="RHEA-COMP:10461"/>
        <dbReference type="Rhea" id="RHEA-COMP:14737"/>
        <dbReference type="Rhea" id="RHEA-COMP:14739"/>
        <dbReference type="ChEBI" id="CHEBI:13193"/>
        <dbReference type="ChEBI" id="CHEBI:15378"/>
        <dbReference type="ChEBI" id="CHEBI:17319"/>
        <dbReference type="ChEBI" id="CHEBI:17499"/>
        <dbReference type="ChEBI" id="CHEBI:29917"/>
        <dbReference type="ChEBI" id="CHEBI:29961"/>
        <dbReference type="ChEBI" id="CHEBI:57844"/>
        <dbReference type="ChEBI" id="CHEBI:57856"/>
        <dbReference type="ChEBI" id="CHEBI:59789"/>
        <dbReference type="ChEBI" id="CHEBI:64428"/>
        <dbReference type="ChEBI" id="CHEBI:73599"/>
        <dbReference type="EC" id="2.8.4.4"/>
    </reaction>
</comment>
<comment type="cofactor">
    <cofactor evidence="1">
        <name>[4Fe-4S] cluster</name>
        <dbReference type="ChEBI" id="CHEBI:49883"/>
    </cofactor>
    <text evidence="1">Binds 2 [4Fe-4S] clusters. One cluster is coordinated with 3 cysteines and an exchangeable S-adenosyl-L-methionine.</text>
</comment>
<comment type="subcellular location">
    <subcellularLocation>
        <location evidence="1">Cytoplasm</location>
    </subcellularLocation>
</comment>
<comment type="similarity">
    <text evidence="1">Belongs to the methylthiotransferase family. RimO subfamily.</text>
</comment>